<keyword id="KW-0150">Chloroplast</keyword>
<keyword id="KW-0507">mRNA processing</keyword>
<keyword id="KW-0934">Plastid</keyword>
<keyword id="KW-0694">RNA-binding</keyword>
<keyword id="KW-0819">tRNA processing</keyword>
<comment type="function">
    <text evidence="1">Usually encoded in the trnK tRNA gene intron. Probably assists in splicing its own and other chloroplast group II introns.</text>
</comment>
<comment type="subcellular location">
    <subcellularLocation>
        <location>Plastid</location>
        <location>Chloroplast</location>
    </subcellularLocation>
</comment>
<comment type="similarity">
    <text evidence="1">Belongs to the intron maturase 2 family. MatK subfamily.</text>
</comment>
<protein>
    <recommendedName>
        <fullName evidence="1">Maturase K</fullName>
    </recommendedName>
    <alternativeName>
        <fullName evidence="1">Intron maturase</fullName>
    </alternativeName>
</protein>
<sequence length="506" mass="61124">MKEYRVYLERARSRQQDFLYPLIFREYIYGLAYSHNFNRSIFVENGGYDNKYTLLNVKRLITRMYQQNHLIISANDSNKNPFLGYNKNFYSQIISEGFAIVVEIPFFLQLSSSLEEAEIIKSYKNVRSIHSVFPFLEDKFTYLNYVSDIRIPYPIHLEILVQILRYWVKDVPFFHLLRWFLYHFXNWNCFIPTKKSISTFSKSNPRLFLFLYNFYVCEYESIFLFLRNKSYHLRLKSFSVFFERNFFYAKREHLVEVFSKDFSYTLPFFKDPNIHYVRYQGKCILASKNVPFLMNKWKYYFIHLWQCFFDVWSQPRTININQLSEHSFQLLGYFSNVRLNRSVVRSQMLQNTFLIEIVSKKLDIIVPIIPLIRSLAKAKFCNVLGHPISKPVWADSSDFDIIXRFLRICRNLSHYYNGSSKKKSLYRIKYILRLSCIKTLACKHKSTVRAFLKRSGSEELLEEFFTEEEEILSLIFPRDSFTLHRFHRNRIWYLDILFSNDLVNDE</sequence>
<gene>
    <name evidence="1" type="primary">matK</name>
</gene>
<geneLocation type="chloroplast"/>
<feature type="chain" id="PRO_0000143758" description="Maturase K">
    <location>
        <begin position="1"/>
        <end position="506"/>
    </location>
</feature>
<name>MATK_TRIWI</name>
<dbReference type="EMBL" id="AF522137">
    <property type="protein sequence ID" value="AAM82129.1"/>
    <property type="molecule type" value="Genomic_DNA"/>
</dbReference>
<dbReference type="GO" id="GO:0009507">
    <property type="term" value="C:chloroplast"/>
    <property type="evidence" value="ECO:0007669"/>
    <property type="project" value="UniProtKB-SubCell"/>
</dbReference>
<dbReference type="GO" id="GO:0003723">
    <property type="term" value="F:RNA binding"/>
    <property type="evidence" value="ECO:0007669"/>
    <property type="project" value="UniProtKB-KW"/>
</dbReference>
<dbReference type="GO" id="GO:0006397">
    <property type="term" value="P:mRNA processing"/>
    <property type="evidence" value="ECO:0007669"/>
    <property type="project" value="UniProtKB-KW"/>
</dbReference>
<dbReference type="GO" id="GO:0008380">
    <property type="term" value="P:RNA splicing"/>
    <property type="evidence" value="ECO:0007669"/>
    <property type="project" value="UniProtKB-UniRule"/>
</dbReference>
<dbReference type="GO" id="GO:0008033">
    <property type="term" value="P:tRNA processing"/>
    <property type="evidence" value="ECO:0007669"/>
    <property type="project" value="UniProtKB-KW"/>
</dbReference>
<dbReference type="HAMAP" id="MF_01390">
    <property type="entry name" value="MatK"/>
    <property type="match status" value="1"/>
</dbReference>
<dbReference type="InterPro" id="IPR024937">
    <property type="entry name" value="Domain_X"/>
</dbReference>
<dbReference type="InterPro" id="IPR002866">
    <property type="entry name" value="Maturase_MatK"/>
</dbReference>
<dbReference type="InterPro" id="IPR024942">
    <property type="entry name" value="Maturase_MatK_N"/>
</dbReference>
<dbReference type="PANTHER" id="PTHR34811">
    <property type="entry name" value="MATURASE K"/>
    <property type="match status" value="1"/>
</dbReference>
<dbReference type="PANTHER" id="PTHR34811:SF1">
    <property type="entry name" value="MATURASE K"/>
    <property type="match status" value="1"/>
</dbReference>
<dbReference type="Pfam" id="PF01348">
    <property type="entry name" value="Intron_maturas2"/>
    <property type="match status" value="1"/>
</dbReference>
<dbReference type="Pfam" id="PF01824">
    <property type="entry name" value="MatK_N"/>
    <property type="match status" value="1"/>
</dbReference>
<organism>
    <name type="scientific">Trifolium willdenovii</name>
    <name type="common">Tomcat clover</name>
    <name type="synonym">Trifolium tridentatum</name>
    <dbReference type="NCBI Taxonomy" id="200959"/>
    <lineage>
        <taxon>Eukaryota</taxon>
        <taxon>Viridiplantae</taxon>
        <taxon>Streptophyta</taxon>
        <taxon>Embryophyta</taxon>
        <taxon>Tracheophyta</taxon>
        <taxon>Spermatophyta</taxon>
        <taxon>Magnoliopsida</taxon>
        <taxon>eudicotyledons</taxon>
        <taxon>Gunneridae</taxon>
        <taxon>Pentapetalae</taxon>
        <taxon>rosids</taxon>
        <taxon>fabids</taxon>
        <taxon>Fabales</taxon>
        <taxon>Fabaceae</taxon>
        <taxon>Papilionoideae</taxon>
        <taxon>50 kb inversion clade</taxon>
        <taxon>NPAAA clade</taxon>
        <taxon>Hologalegina</taxon>
        <taxon>IRL clade</taxon>
        <taxon>Trifolieae</taxon>
        <taxon>Trifolium</taxon>
    </lineage>
</organism>
<accession>Q8MCL8</accession>
<proteinExistence type="inferred from homology"/>
<reference key="1">
    <citation type="book" date="2003" name="Advances in legume systematics - part 10">
        <title>Phylogenetic analyses of tribes Trifolieae and Vicieae based on sequences of the plastid gene matK (Papilionoideae: Leguminosae).</title>
        <editorList>
            <person name="Klitgaard B.B."/>
            <person name="Bruneau A."/>
        </editorList>
        <authorList>
            <person name="Steele K.P."/>
            <person name="Wojciechowski M.F."/>
        </authorList>
    </citation>
    <scope>NUCLEOTIDE SEQUENCE [GENOMIC DNA]</scope>
</reference>
<evidence type="ECO:0000255" key="1">
    <source>
        <dbReference type="HAMAP-Rule" id="MF_01390"/>
    </source>
</evidence>